<dbReference type="EC" id="4.99.1.3" evidence="9 11"/>
<dbReference type="EMBL" id="L12006">
    <property type="protein sequence ID" value="AAA27262.1"/>
    <property type="molecule type" value="Genomic_DNA"/>
</dbReference>
<dbReference type="EMBL" id="AE006468">
    <property type="protein sequence ID" value="AAL20929.1"/>
    <property type="molecule type" value="Genomic_DNA"/>
</dbReference>
<dbReference type="RefSeq" id="NP_460970.1">
    <property type="nucleotide sequence ID" value="NC_003197.2"/>
</dbReference>
<dbReference type="RefSeq" id="WP_000709784.1">
    <property type="nucleotide sequence ID" value="NC_003197.2"/>
</dbReference>
<dbReference type="PDB" id="1QGO">
    <property type="method" value="X-ray"/>
    <property type="resolution" value="2.40 A"/>
    <property type="chains" value="A=1-264"/>
</dbReference>
<dbReference type="PDB" id="2XWP">
    <property type="method" value="X-ray"/>
    <property type="resolution" value="1.90 A"/>
    <property type="chains" value="A=1-264"/>
</dbReference>
<dbReference type="PDBsum" id="1QGO"/>
<dbReference type="PDBsum" id="2XWP"/>
<dbReference type="SMR" id="Q05592"/>
<dbReference type="STRING" id="99287.STM2025"/>
<dbReference type="PaxDb" id="99287-STM2025"/>
<dbReference type="GeneID" id="1253546"/>
<dbReference type="KEGG" id="stm:STM2025"/>
<dbReference type="PATRIC" id="fig|99287.12.peg.2147"/>
<dbReference type="HOGENOM" id="CLU_036584_1_1_6"/>
<dbReference type="OMA" id="FMFVAGD"/>
<dbReference type="PhylomeDB" id="Q05592"/>
<dbReference type="BioCyc" id="MetaCyc:MONOMER-13175"/>
<dbReference type="BioCyc" id="SENT99287:STM2025-MONOMER"/>
<dbReference type="UniPathway" id="UPA00148">
    <property type="reaction ID" value="UER00223"/>
</dbReference>
<dbReference type="EvolutionaryTrace" id="Q05592"/>
<dbReference type="Proteomes" id="UP000001014">
    <property type="component" value="Chromosome"/>
</dbReference>
<dbReference type="GO" id="GO:0050897">
    <property type="term" value="F:cobalt ion binding"/>
    <property type="evidence" value="ECO:0000314"/>
    <property type="project" value="UniProtKB"/>
</dbReference>
<dbReference type="GO" id="GO:0016852">
    <property type="term" value="F:sirohydrochlorin cobaltochelatase activity"/>
    <property type="evidence" value="ECO:0007669"/>
    <property type="project" value="UniProtKB-EC"/>
</dbReference>
<dbReference type="GO" id="GO:0046906">
    <property type="term" value="F:tetrapyrrole binding"/>
    <property type="evidence" value="ECO:0000314"/>
    <property type="project" value="UniProtKB"/>
</dbReference>
<dbReference type="GO" id="GO:0019251">
    <property type="term" value="P:anaerobic cobalamin biosynthetic process"/>
    <property type="evidence" value="ECO:0007669"/>
    <property type="project" value="InterPro"/>
</dbReference>
<dbReference type="GO" id="GO:0006779">
    <property type="term" value="P:porphyrin-containing compound biosynthetic process"/>
    <property type="evidence" value="ECO:0007669"/>
    <property type="project" value="UniProtKB-KW"/>
</dbReference>
<dbReference type="CDD" id="cd03413">
    <property type="entry name" value="CbiK_C"/>
    <property type="match status" value="1"/>
</dbReference>
<dbReference type="CDD" id="cd03412">
    <property type="entry name" value="CbiK_N"/>
    <property type="match status" value="1"/>
</dbReference>
<dbReference type="Gene3D" id="3.40.50.1400">
    <property type="match status" value="2"/>
</dbReference>
<dbReference type="InterPro" id="IPR010388">
    <property type="entry name" value="Anaerobic_Co-chelatase"/>
</dbReference>
<dbReference type="NCBIfam" id="NF047852">
    <property type="entry name" value="SiroCoChCbiK"/>
    <property type="match status" value="1"/>
</dbReference>
<dbReference type="Pfam" id="PF06180">
    <property type="entry name" value="CbiK"/>
    <property type="match status" value="1"/>
</dbReference>
<dbReference type="PIRSF" id="PIRSF033579">
    <property type="entry name" value="Anaer_Co_chel"/>
    <property type="match status" value="1"/>
</dbReference>
<dbReference type="SUPFAM" id="SSF53800">
    <property type="entry name" value="Chelatase"/>
    <property type="match status" value="1"/>
</dbReference>
<name>CBIK_SALTY</name>
<comment type="function">
    <text evidence="2 5 8">Cobalt chelatase responsible for the insertion of cobalt during anaerobic cobalamin biosynthesis (PubMed:10451360, PubMed:9150215). Can catalyze the insertion of Co(2+) into either sirohydrochlorin or precorrin-2 (PubMed:10451360, PubMed:9150215). It is not clear which is the natural substrate in Salmonella (Probable).</text>
</comment>
<comment type="catalytic activity">
    <reaction evidence="9 11">
        <text>Co-sirohydrochlorin + 2 H(+) = sirohydrochlorin + Co(2+)</text>
        <dbReference type="Rhea" id="RHEA:15893"/>
        <dbReference type="ChEBI" id="CHEBI:15378"/>
        <dbReference type="ChEBI" id="CHEBI:48828"/>
        <dbReference type="ChEBI" id="CHEBI:58351"/>
        <dbReference type="ChEBI" id="CHEBI:60049"/>
        <dbReference type="EC" id="4.99.1.3"/>
    </reaction>
</comment>
<comment type="catalytic activity">
    <reaction evidence="9 11">
        <text>Co-precorrin-2 + 3 H(+) = precorrin-2 + Co(2+)</text>
        <dbReference type="Rhea" id="RHEA:26269"/>
        <dbReference type="ChEBI" id="CHEBI:15378"/>
        <dbReference type="ChEBI" id="CHEBI:48828"/>
        <dbReference type="ChEBI" id="CHEBI:58827"/>
        <dbReference type="ChEBI" id="CHEBI:60053"/>
        <dbReference type="EC" id="4.99.1.3"/>
    </reaction>
</comment>
<comment type="pathway">
    <text>Cofactor biosynthesis; adenosylcobalamin biosynthesis; cob(II)yrinate a,c-diamide from sirohydrochlorin (anaerobic route): step 1/10.</text>
</comment>
<comment type="subunit">
    <text evidence="2">Homotrimer.</text>
</comment>
<comment type="induction">
    <text evidence="4">Part of the cob operon, which encodes enzymes involved in cobalamin biosynthetis.</text>
</comment>
<comment type="miscellaneous">
    <text evidence="2 5">In the absence of Co(2+), can act as a precorrin-2 ferrochelatase since, in conjunction with a uroporphyrinogen III methyltransferase such as CobA from P.denitrificans, it can complement an E.coli cysG deletion strain (PubMed:10451360, PubMed:9150215). However, this complementation is easily inhibited in the presence of low concentrations of exogenous cobalt, a result that can be explained on the basis of a higher specificity for cobalt over ferrous ions (PubMed:10451360, PubMed:9150215).</text>
</comment>
<comment type="similarity">
    <text evidence="8">Belongs to the CbiK family.</text>
</comment>
<feature type="chain" id="PRO_0000218656" description="Sirohydrochlorin cobaltochelatase">
    <location>
        <begin position="1"/>
        <end position="264"/>
    </location>
</feature>
<feature type="active site" description="Proton acceptor" evidence="10">
    <location>
        <position position="145"/>
    </location>
</feature>
<feature type="binding site" evidence="3 13">
    <location>
        <position position="45"/>
    </location>
    <ligand>
        <name>Co-sirohydrochlorin</name>
        <dbReference type="ChEBI" id="CHEBI:60049"/>
    </ligand>
</feature>
<feature type="binding site" evidence="3 13">
    <location>
        <position position="84"/>
    </location>
    <ligand>
        <name>Co-sirohydrochlorin</name>
        <dbReference type="ChEBI" id="CHEBI:60049"/>
    </ligand>
</feature>
<feature type="binding site" evidence="3 13">
    <location>
        <position position="85"/>
    </location>
    <ligand>
        <name>Co-sirohydrochlorin</name>
        <dbReference type="ChEBI" id="CHEBI:60049"/>
    </ligand>
</feature>
<feature type="binding site" evidence="3 13">
    <location>
        <position position="88"/>
    </location>
    <ligand>
        <name>Co-sirohydrochlorin</name>
        <dbReference type="ChEBI" id="CHEBI:60049"/>
    </ligand>
</feature>
<feature type="binding site" evidence="3 13">
    <location>
        <position position="89"/>
    </location>
    <ligand>
        <name>Co-sirohydrochlorin</name>
        <dbReference type="ChEBI" id="CHEBI:60049"/>
    </ligand>
</feature>
<feature type="binding site" evidence="3 13">
    <location>
        <position position="92"/>
    </location>
    <ligand>
        <name>Co-sirohydrochlorin</name>
        <dbReference type="ChEBI" id="CHEBI:60049"/>
    </ligand>
</feature>
<feature type="binding site" evidence="1">
    <location>
        <position position="145"/>
    </location>
    <ligand>
        <name>Co(2+)</name>
        <dbReference type="ChEBI" id="CHEBI:48828"/>
    </ligand>
</feature>
<feature type="binding site" evidence="1">
    <location>
        <position position="175"/>
    </location>
    <ligand>
        <name>Co(2+)</name>
        <dbReference type="ChEBI" id="CHEBI:48828"/>
    </ligand>
</feature>
<feature type="binding site" evidence="3 13">
    <location>
        <position position="202"/>
    </location>
    <ligand>
        <name>Co-sirohydrochlorin</name>
        <dbReference type="ChEBI" id="CHEBI:60049"/>
    </ligand>
</feature>
<feature type="binding site" evidence="3 13">
    <location>
        <position position="203"/>
    </location>
    <ligand>
        <name>Co-sirohydrochlorin</name>
        <dbReference type="ChEBI" id="CHEBI:60049"/>
    </ligand>
</feature>
<feature type="binding site" evidence="1">
    <location>
        <position position="207"/>
    </location>
    <ligand>
        <name>Co(2+)</name>
        <dbReference type="ChEBI" id="CHEBI:48828"/>
    </ligand>
</feature>
<feature type="binding site" evidence="3 13">
    <location>
        <position position="207"/>
    </location>
    <ligand>
        <name>Co-sirohydrochlorin</name>
        <dbReference type="ChEBI" id="CHEBI:60049"/>
    </ligand>
</feature>
<feature type="mutagenesis site" description="Can complement the E.coli cysG mutant in the absence of exogenous cobalt." evidence="2">
    <original>E</original>
    <variation>A</variation>
    <location>
        <position position="89"/>
    </location>
</feature>
<feature type="mutagenesis site" description="Is barely able to complement the E.coli cysG mutant in the absence of exogenous cobalt. Can slightly complement the cysG deletion strain in the presence of exogenous cobalt, suggesting that the mutant has an altered, lower specificity for cobalt." evidence="2">
    <original>H</original>
    <variation>A</variation>
    <location>
        <position position="145"/>
    </location>
</feature>
<feature type="mutagenesis site" description="Can complement the E.coli cysG mutant in the absence of exogenous cobalt." evidence="2">
    <original>E</original>
    <variation>A</variation>
    <location>
        <position position="175"/>
    </location>
</feature>
<feature type="mutagenesis site" description="Can complement the E.coli cysG mutant in the absence of exogenous cobalt. Can also complement the cysG deletion strain in the presence of exogenous cobalt, suggesting that the mutant has an altered, lower specificity for cobalt." evidence="2">
    <original>H</original>
    <variation>A</variation>
    <location>
        <position position="207"/>
    </location>
</feature>
<feature type="mutagenesis site" description="Can complement the E.coli cysG mutant in the absence of exogenous cobalt." evidence="2">
    <original>D</original>
    <variation>A</variation>
    <location>
        <position position="211"/>
    </location>
</feature>
<feature type="strand" evidence="15">
    <location>
        <begin position="3"/>
        <end position="9"/>
    </location>
</feature>
<feature type="helix" evidence="15">
    <location>
        <begin position="15"/>
        <end position="32"/>
    </location>
</feature>
<feature type="strand" evidence="15">
    <location>
        <begin position="36"/>
        <end position="43"/>
    </location>
</feature>
<feature type="helix" evidence="15">
    <location>
        <begin position="45"/>
        <end position="55"/>
    </location>
</feature>
<feature type="helix" evidence="15">
    <location>
        <begin position="62"/>
        <end position="72"/>
    </location>
</feature>
<feature type="strand" evidence="15">
    <location>
        <begin position="76"/>
        <end position="81"/>
    </location>
</feature>
<feature type="strand" evidence="15">
    <location>
        <begin position="84"/>
        <end position="87"/>
    </location>
</feature>
<feature type="helix" evidence="15">
    <location>
        <begin position="88"/>
        <end position="100"/>
    </location>
</feature>
<feature type="helix" evidence="15">
    <location>
        <begin position="101"/>
        <end position="103"/>
    </location>
</feature>
<feature type="strand" evidence="15">
    <location>
        <begin position="105"/>
        <end position="110"/>
    </location>
</feature>
<feature type="strand" evidence="14">
    <location>
        <begin position="113"/>
        <end position="116"/>
    </location>
</feature>
<feature type="helix" evidence="15">
    <location>
        <begin position="117"/>
        <end position="128"/>
    </location>
</feature>
<feature type="strand" evidence="15">
    <location>
        <begin position="138"/>
        <end position="144"/>
    </location>
</feature>
<feature type="helix" evidence="15">
    <location>
        <begin position="150"/>
        <end position="152"/>
    </location>
</feature>
<feature type="helix" evidence="15">
    <location>
        <begin position="153"/>
        <end position="164"/>
    </location>
</feature>
<feature type="strand" evidence="15">
    <location>
        <begin position="168"/>
        <end position="178"/>
    </location>
</feature>
<feature type="helix" evidence="15">
    <location>
        <begin position="180"/>
        <end position="190"/>
    </location>
</feature>
<feature type="strand" evidence="15">
    <location>
        <begin position="194"/>
        <end position="199"/>
    </location>
</feature>
<feature type="strand" evidence="14">
    <location>
        <begin position="201"/>
        <end position="203"/>
    </location>
</feature>
<feature type="helix" evidence="15">
    <location>
        <begin position="206"/>
        <end position="213"/>
    </location>
</feature>
<feature type="strand" evidence="15">
    <location>
        <begin position="214"/>
        <end position="216"/>
    </location>
</feature>
<feature type="helix" evidence="15">
    <location>
        <begin position="220"/>
        <end position="226"/>
    </location>
</feature>
<feature type="strand" evidence="15">
    <location>
        <begin position="231"/>
        <end position="233"/>
    </location>
</feature>
<feature type="helix" evidence="15">
    <location>
        <begin position="238"/>
        <end position="240"/>
    </location>
</feature>
<feature type="helix" evidence="15">
    <location>
        <begin position="242"/>
        <end position="256"/>
    </location>
</feature>
<protein>
    <recommendedName>
        <fullName evidence="8">Sirohydrochlorin cobaltochelatase</fullName>
        <ecNumber evidence="9 11">4.99.1.3</ecNumber>
    </recommendedName>
    <alternativeName>
        <fullName evidence="6">Anaerobic cobalt chelatase</fullName>
    </alternativeName>
</protein>
<keyword id="KW-0002">3D-structure</keyword>
<keyword id="KW-0169">Cobalamin biosynthesis</keyword>
<keyword id="KW-0170">Cobalt</keyword>
<keyword id="KW-0903">Direct protein sequencing</keyword>
<keyword id="KW-0456">Lyase</keyword>
<keyword id="KW-0479">Metal-binding</keyword>
<keyword id="KW-0627">Porphyrin biosynthesis</keyword>
<keyword id="KW-1185">Reference proteome</keyword>
<organism>
    <name type="scientific">Salmonella typhimurium (strain LT2 / SGSC1412 / ATCC 700720)</name>
    <dbReference type="NCBI Taxonomy" id="99287"/>
    <lineage>
        <taxon>Bacteria</taxon>
        <taxon>Pseudomonadati</taxon>
        <taxon>Pseudomonadota</taxon>
        <taxon>Gammaproteobacteria</taxon>
        <taxon>Enterobacterales</taxon>
        <taxon>Enterobacteriaceae</taxon>
        <taxon>Salmonella</taxon>
    </lineage>
</organism>
<evidence type="ECO:0000250" key="1">
    <source>
        <dbReference type="UniProtKB" id="Q72EC8"/>
    </source>
</evidence>
<evidence type="ECO:0000269" key="2">
    <source>
    </source>
</evidence>
<evidence type="ECO:0000269" key="3">
    <source>
    </source>
</evidence>
<evidence type="ECO:0000269" key="4">
    <source>
    </source>
</evidence>
<evidence type="ECO:0000269" key="5">
    <source>
    </source>
</evidence>
<evidence type="ECO:0000303" key="6">
    <source>
    </source>
</evidence>
<evidence type="ECO:0000303" key="7">
    <source>
    </source>
</evidence>
<evidence type="ECO:0000305" key="8"/>
<evidence type="ECO:0000305" key="9">
    <source>
    </source>
</evidence>
<evidence type="ECO:0000305" key="10">
    <source>
    </source>
</evidence>
<evidence type="ECO:0000305" key="11">
    <source>
    </source>
</evidence>
<evidence type="ECO:0007744" key="12">
    <source>
        <dbReference type="PDB" id="1QGO"/>
    </source>
</evidence>
<evidence type="ECO:0007744" key="13">
    <source>
        <dbReference type="PDB" id="2XWP"/>
    </source>
</evidence>
<evidence type="ECO:0007829" key="14">
    <source>
        <dbReference type="PDB" id="1QGO"/>
    </source>
</evidence>
<evidence type="ECO:0007829" key="15">
    <source>
        <dbReference type="PDB" id="2XWP"/>
    </source>
</evidence>
<reference key="1">
    <citation type="journal article" date="1993" name="J. Bacteriol.">
        <title>Characterization of the cobalamin (vitamin B12) biosynthetic genes of Salmonella typhimurium.</title>
        <authorList>
            <person name="Roth J.R."/>
            <person name="Lawrence J.G."/>
            <person name="Rubenfield M."/>
            <person name="Kieffer-Higgins S."/>
            <person name="Church G.M."/>
        </authorList>
    </citation>
    <scope>NUCLEOTIDE SEQUENCE [GENOMIC DNA]</scope>
    <scope>PROTEIN SEQUENCE OF N-TERMINUS</scope>
    <scope>OPERON</scope>
    <source>
        <strain>LT2</strain>
    </source>
</reference>
<reference key="2">
    <citation type="journal article" date="2001" name="Nature">
        <title>Complete genome sequence of Salmonella enterica serovar Typhimurium LT2.</title>
        <authorList>
            <person name="McClelland M."/>
            <person name="Sanderson K.E."/>
            <person name="Spieth J."/>
            <person name="Clifton S.W."/>
            <person name="Latreille P."/>
            <person name="Courtney L."/>
            <person name="Porwollik S."/>
            <person name="Ali J."/>
            <person name="Dante M."/>
            <person name="Du F."/>
            <person name="Hou S."/>
            <person name="Layman D."/>
            <person name="Leonard S."/>
            <person name="Nguyen C."/>
            <person name="Scott K."/>
            <person name="Holmes A."/>
            <person name="Grewal N."/>
            <person name="Mulvaney E."/>
            <person name="Ryan E."/>
            <person name="Sun H."/>
            <person name="Florea L."/>
            <person name="Miller W."/>
            <person name="Stoneking T."/>
            <person name="Nhan M."/>
            <person name="Waterston R."/>
            <person name="Wilson R.K."/>
        </authorList>
    </citation>
    <scope>NUCLEOTIDE SEQUENCE [LARGE SCALE GENOMIC DNA]</scope>
    <source>
        <strain>LT2 / SGSC1412 / ATCC 700720</strain>
    </source>
</reference>
<reference key="3">
    <citation type="journal article" date="1992" name="FEBS Lett.">
        <title>Expression of 9 Salmonella typhimurium enzymes for cobinamide synthesis. Identification of the 11-methyl and 20-methyl transferases of corrin biosynthesis.</title>
        <authorList>
            <person name="Roessner C.A."/>
            <person name="Warren M.J."/>
            <person name="Santander P.J."/>
            <person name="Atshaves B.P."/>
            <person name="Ozaki S."/>
            <person name="Stolowich N.J."/>
            <person name="Iida K."/>
            <person name="Scott A.I."/>
        </authorList>
    </citation>
    <scope>PROTEIN SEQUENCE OF 1-10</scope>
</reference>
<reference key="4">
    <citation type="journal article" date="1997" name="J. Bacteriol.">
        <title>A role for Salmonella typhimurium cbiK in cobalamin (vitamin B12) and siroheme biosynthesis.</title>
        <authorList>
            <person name="Raux E."/>
            <person name="Thermes C."/>
            <person name="Heathcote P."/>
            <person name="Rambach A."/>
            <person name="Warren M.J."/>
        </authorList>
    </citation>
    <scope>FUNCTION</scope>
</reference>
<reference evidence="12" key="5">
    <citation type="journal article" date="1999" name="Biochemistry">
        <title>Common chelatase design in the branched tetrapyrrole pathways of heme and anaerobic cobalamin synthesis.</title>
        <authorList>
            <person name="Schubert H.L."/>
            <person name="Raux E."/>
            <person name="Wilson K.S."/>
            <person name="Warren M.J."/>
        </authorList>
    </citation>
    <scope>X-RAY CRYSTALLOGRAPHY (2.4 ANGSTROMS)</scope>
    <scope>FUNCTION</scope>
    <scope>SUBUNIT</scope>
    <scope>MUTAGENESIS OF GLU-89; HIS-145; GLU-175; HIS-207 AND ASP-211</scope>
    <source>
        <strain>LT2</strain>
    </source>
</reference>
<reference evidence="13" key="6">
    <citation type="journal article" date="2011" name="Proc. Natl. Acad. Sci. U.S.A.">
        <title>Evolution in a family of chelatases facilitated by the introduction of active site asymmetry and protein oligomerization.</title>
        <authorList>
            <person name="Romao C.V."/>
            <person name="Ladakis D."/>
            <person name="Lobo S.A."/>
            <person name="Carrondo M.A."/>
            <person name="Brindley A.A."/>
            <person name="Deery E."/>
            <person name="Matias P.M."/>
            <person name="Pickersgill R.W."/>
            <person name="Saraiva L.M."/>
            <person name="Warren M.J."/>
        </authorList>
    </citation>
    <scope>X-RAY CRYSTALLOGRAPHY (1.9 ANGSTROMS) IN COMPLEX WITH COBALT-SIROHYDROCHLORIN</scope>
    <scope>REACTION MECHANISM</scope>
    <scope>ACTIVE SITE</scope>
</reference>
<proteinExistence type="evidence at protein level"/>
<sequence length="264" mass="29239">MKKALLVVSFGTSYHDTCEKNIVACERDLAASCPDRDLFRAFTSGMIIRKLRQRDGIDIDTPLQALQKLAAQGYQDVAIQSLHIINGDEYEKIVREVQLLRPLFTRLTLGVPLLSSHNDYVQLMQALRQQMPSLRQTEKVVFMGHGASHHAFAAYACLDHMMTAQRFPARVGAVESYPEVDILIDSLRDEGVTGVHLMPLMLVAGDHAINDMASDDGDSWKMRFNAAGIPATPWLSGLGENPAIRAMFVAHLHQALNMAVEEAA</sequence>
<accession>Q05592</accession>
<gene>
    <name evidence="7" type="primary">cbiK</name>
    <name type="ordered locus">STM2025</name>
</gene>